<accession>Q6N5C3</accession>
<keyword id="KW-0067">ATP-binding</keyword>
<keyword id="KW-0963">Cytoplasm</keyword>
<keyword id="KW-0418">Kinase</keyword>
<keyword id="KW-0460">Magnesium</keyword>
<keyword id="KW-0479">Metal-binding</keyword>
<keyword id="KW-0546">Nucleotide metabolism</keyword>
<keyword id="KW-0547">Nucleotide-binding</keyword>
<keyword id="KW-0597">Phosphoprotein</keyword>
<keyword id="KW-0808">Transferase</keyword>
<dbReference type="EC" id="2.7.4.6" evidence="1"/>
<dbReference type="EMBL" id="BX572602">
    <property type="protein sequence ID" value="CAE28497.1"/>
    <property type="molecule type" value="Genomic_DNA"/>
</dbReference>
<dbReference type="RefSeq" id="WP_011158602.1">
    <property type="nucleotide sequence ID" value="NZ_CP116810.1"/>
</dbReference>
<dbReference type="SMR" id="Q6N5C3"/>
<dbReference type="STRING" id="258594.RPA3056"/>
<dbReference type="GeneID" id="66894138"/>
<dbReference type="eggNOG" id="COG0105">
    <property type="taxonomic scope" value="Bacteria"/>
</dbReference>
<dbReference type="HOGENOM" id="CLU_060216_8_1_5"/>
<dbReference type="PhylomeDB" id="Q6N5C3"/>
<dbReference type="GO" id="GO:0005737">
    <property type="term" value="C:cytoplasm"/>
    <property type="evidence" value="ECO:0007669"/>
    <property type="project" value="UniProtKB-SubCell"/>
</dbReference>
<dbReference type="GO" id="GO:0005524">
    <property type="term" value="F:ATP binding"/>
    <property type="evidence" value="ECO:0007669"/>
    <property type="project" value="UniProtKB-UniRule"/>
</dbReference>
<dbReference type="GO" id="GO:0046872">
    <property type="term" value="F:metal ion binding"/>
    <property type="evidence" value="ECO:0007669"/>
    <property type="project" value="UniProtKB-KW"/>
</dbReference>
<dbReference type="GO" id="GO:0004550">
    <property type="term" value="F:nucleoside diphosphate kinase activity"/>
    <property type="evidence" value="ECO:0007669"/>
    <property type="project" value="UniProtKB-UniRule"/>
</dbReference>
<dbReference type="GO" id="GO:0006241">
    <property type="term" value="P:CTP biosynthetic process"/>
    <property type="evidence" value="ECO:0007669"/>
    <property type="project" value="UniProtKB-UniRule"/>
</dbReference>
<dbReference type="GO" id="GO:0006183">
    <property type="term" value="P:GTP biosynthetic process"/>
    <property type="evidence" value="ECO:0007669"/>
    <property type="project" value="UniProtKB-UniRule"/>
</dbReference>
<dbReference type="GO" id="GO:0006228">
    <property type="term" value="P:UTP biosynthetic process"/>
    <property type="evidence" value="ECO:0007669"/>
    <property type="project" value="UniProtKB-UniRule"/>
</dbReference>
<dbReference type="CDD" id="cd04413">
    <property type="entry name" value="NDPk_I"/>
    <property type="match status" value="1"/>
</dbReference>
<dbReference type="Gene3D" id="3.30.70.141">
    <property type="entry name" value="Nucleoside diphosphate kinase-like domain"/>
    <property type="match status" value="1"/>
</dbReference>
<dbReference type="HAMAP" id="MF_00451">
    <property type="entry name" value="NDP_kinase"/>
    <property type="match status" value="1"/>
</dbReference>
<dbReference type="InterPro" id="IPR034907">
    <property type="entry name" value="NDK-like_dom"/>
</dbReference>
<dbReference type="InterPro" id="IPR036850">
    <property type="entry name" value="NDK-like_dom_sf"/>
</dbReference>
<dbReference type="InterPro" id="IPR001564">
    <property type="entry name" value="Nucleoside_diP_kinase"/>
</dbReference>
<dbReference type="NCBIfam" id="NF001908">
    <property type="entry name" value="PRK00668.1"/>
    <property type="match status" value="1"/>
</dbReference>
<dbReference type="PANTHER" id="PTHR46161">
    <property type="entry name" value="NUCLEOSIDE DIPHOSPHATE KINASE"/>
    <property type="match status" value="1"/>
</dbReference>
<dbReference type="PANTHER" id="PTHR46161:SF3">
    <property type="entry name" value="NUCLEOSIDE DIPHOSPHATE KINASE DDB_G0292928-RELATED"/>
    <property type="match status" value="1"/>
</dbReference>
<dbReference type="Pfam" id="PF00334">
    <property type="entry name" value="NDK"/>
    <property type="match status" value="1"/>
</dbReference>
<dbReference type="PRINTS" id="PR01243">
    <property type="entry name" value="NUCDPKINASE"/>
</dbReference>
<dbReference type="SMART" id="SM00562">
    <property type="entry name" value="NDK"/>
    <property type="match status" value="1"/>
</dbReference>
<dbReference type="SUPFAM" id="SSF54919">
    <property type="entry name" value="Nucleoside diphosphate kinase, NDK"/>
    <property type="match status" value="1"/>
</dbReference>
<dbReference type="PROSITE" id="PS51374">
    <property type="entry name" value="NDPK_LIKE"/>
    <property type="match status" value="1"/>
</dbReference>
<reference key="1">
    <citation type="journal article" date="2004" name="Nat. Biotechnol.">
        <title>Complete genome sequence of the metabolically versatile photosynthetic bacterium Rhodopseudomonas palustris.</title>
        <authorList>
            <person name="Larimer F.W."/>
            <person name="Chain P."/>
            <person name="Hauser L."/>
            <person name="Lamerdin J.E."/>
            <person name="Malfatti S."/>
            <person name="Do L."/>
            <person name="Land M.L."/>
            <person name="Pelletier D.A."/>
            <person name="Beatty J.T."/>
            <person name="Lang A.S."/>
            <person name="Tabita F.R."/>
            <person name="Gibson J.L."/>
            <person name="Hanson T.E."/>
            <person name="Bobst C."/>
            <person name="Torres y Torres J.L."/>
            <person name="Peres C."/>
            <person name="Harrison F.H."/>
            <person name="Gibson J."/>
            <person name="Harwood C.S."/>
        </authorList>
    </citation>
    <scope>NUCLEOTIDE SEQUENCE [LARGE SCALE GENOMIC DNA]</scope>
    <source>
        <strain>ATCC BAA-98 / CGA009</strain>
    </source>
</reference>
<comment type="function">
    <text evidence="1">Major role in the synthesis of nucleoside triphosphates other than ATP. The ATP gamma phosphate is transferred to the NDP beta phosphate via a ping-pong mechanism, using a phosphorylated active-site intermediate.</text>
</comment>
<comment type="catalytic activity">
    <reaction evidence="1">
        <text>a 2'-deoxyribonucleoside 5'-diphosphate + ATP = a 2'-deoxyribonucleoside 5'-triphosphate + ADP</text>
        <dbReference type="Rhea" id="RHEA:44640"/>
        <dbReference type="ChEBI" id="CHEBI:30616"/>
        <dbReference type="ChEBI" id="CHEBI:61560"/>
        <dbReference type="ChEBI" id="CHEBI:73316"/>
        <dbReference type="ChEBI" id="CHEBI:456216"/>
        <dbReference type="EC" id="2.7.4.6"/>
    </reaction>
</comment>
<comment type="catalytic activity">
    <reaction evidence="1">
        <text>a ribonucleoside 5'-diphosphate + ATP = a ribonucleoside 5'-triphosphate + ADP</text>
        <dbReference type="Rhea" id="RHEA:18113"/>
        <dbReference type="ChEBI" id="CHEBI:30616"/>
        <dbReference type="ChEBI" id="CHEBI:57930"/>
        <dbReference type="ChEBI" id="CHEBI:61557"/>
        <dbReference type="ChEBI" id="CHEBI:456216"/>
        <dbReference type="EC" id="2.7.4.6"/>
    </reaction>
</comment>
<comment type="cofactor">
    <cofactor evidence="1">
        <name>Mg(2+)</name>
        <dbReference type="ChEBI" id="CHEBI:18420"/>
    </cofactor>
</comment>
<comment type="subunit">
    <text evidence="1">Homotetramer.</text>
</comment>
<comment type="subcellular location">
    <subcellularLocation>
        <location evidence="1">Cytoplasm</location>
    </subcellularLocation>
</comment>
<comment type="similarity">
    <text evidence="1">Belongs to the NDK family.</text>
</comment>
<proteinExistence type="inferred from homology"/>
<sequence>MAIERTFSILKPDATERNITGAINALIEKAGLRIVAQKRIRMTRDQAETFYAVHKERPFFGELVDFMISGPVVVQVLEGEGAIAKYRDVMGATDPSKAADGTIRKLHAKSIGENSVHGSDAAETAKIEIAQFFSGNEIVG</sequence>
<feature type="chain" id="PRO_0000137031" description="Nucleoside diphosphate kinase">
    <location>
        <begin position="1"/>
        <end position="140"/>
    </location>
</feature>
<feature type="active site" description="Pros-phosphohistidine intermediate" evidence="1">
    <location>
        <position position="117"/>
    </location>
</feature>
<feature type="binding site" evidence="1">
    <location>
        <position position="11"/>
    </location>
    <ligand>
        <name>ATP</name>
        <dbReference type="ChEBI" id="CHEBI:30616"/>
    </ligand>
</feature>
<feature type="binding site" evidence="1">
    <location>
        <position position="59"/>
    </location>
    <ligand>
        <name>ATP</name>
        <dbReference type="ChEBI" id="CHEBI:30616"/>
    </ligand>
</feature>
<feature type="binding site" evidence="1">
    <location>
        <position position="87"/>
    </location>
    <ligand>
        <name>ATP</name>
        <dbReference type="ChEBI" id="CHEBI:30616"/>
    </ligand>
</feature>
<feature type="binding site" evidence="1">
    <location>
        <position position="93"/>
    </location>
    <ligand>
        <name>ATP</name>
        <dbReference type="ChEBI" id="CHEBI:30616"/>
    </ligand>
</feature>
<feature type="binding site" evidence="1">
    <location>
        <position position="104"/>
    </location>
    <ligand>
        <name>ATP</name>
        <dbReference type="ChEBI" id="CHEBI:30616"/>
    </ligand>
</feature>
<feature type="binding site" evidence="1">
    <location>
        <position position="114"/>
    </location>
    <ligand>
        <name>ATP</name>
        <dbReference type="ChEBI" id="CHEBI:30616"/>
    </ligand>
</feature>
<name>NDK_RHOPA</name>
<evidence type="ECO:0000255" key="1">
    <source>
        <dbReference type="HAMAP-Rule" id="MF_00451"/>
    </source>
</evidence>
<gene>
    <name evidence="1" type="primary">ndk</name>
    <name type="ordered locus">RPA3056</name>
</gene>
<organism>
    <name type="scientific">Rhodopseudomonas palustris (strain ATCC BAA-98 / CGA009)</name>
    <dbReference type="NCBI Taxonomy" id="258594"/>
    <lineage>
        <taxon>Bacteria</taxon>
        <taxon>Pseudomonadati</taxon>
        <taxon>Pseudomonadota</taxon>
        <taxon>Alphaproteobacteria</taxon>
        <taxon>Hyphomicrobiales</taxon>
        <taxon>Nitrobacteraceae</taxon>
        <taxon>Rhodopseudomonas</taxon>
    </lineage>
</organism>
<protein>
    <recommendedName>
        <fullName evidence="1">Nucleoside diphosphate kinase</fullName>
        <shortName evidence="1">NDK</shortName>
        <shortName evidence="1">NDP kinase</shortName>
        <ecNumber evidence="1">2.7.4.6</ecNumber>
    </recommendedName>
    <alternativeName>
        <fullName evidence="1">Nucleoside-2-P kinase</fullName>
    </alternativeName>
</protein>